<organism>
    <name type="scientific">Drosophila ananassae</name>
    <name type="common">Fruit fly</name>
    <dbReference type="NCBI Taxonomy" id="7217"/>
    <lineage>
        <taxon>Eukaryota</taxon>
        <taxon>Metazoa</taxon>
        <taxon>Ecdysozoa</taxon>
        <taxon>Arthropoda</taxon>
        <taxon>Hexapoda</taxon>
        <taxon>Insecta</taxon>
        <taxon>Pterygota</taxon>
        <taxon>Neoptera</taxon>
        <taxon>Endopterygota</taxon>
        <taxon>Diptera</taxon>
        <taxon>Brachycera</taxon>
        <taxon>Muscomorpha</taxon>
        <taxon>Ephydroidea</taxon>
        <taxon>Drosophilidae</taxon>
        <taxon>Drosophila</taxon>
        <taxon>Sophophora</taxon>
    </lineage>
</organism>
<keyword id="KW-0963">Cytoplasm</keyword>
<keyword id="KW-1017">Isopeptide bond</keyword>
<keyword id="KW-1185">Reference proteome</keyword>
<keyword id="KW-0819">tRNA processing</keyword>
<keyword id="KW-0833">Ubl conjugation pathway</keyword>
<feature type="chain" id="PRO_0000367855" description="Ubiquitin-related modifier 1 homolog">
    <location>
        <begin position="1"/>
        <end position="101"/>
    </location>
</feature>
<feature type="modified residue" description="1-thioglycine" evidence="2">
    <location>
        <position position="101"/>
    </location>
</feature>
<feature type="cross-link" description="Glycyl lysine isopeptide (Gly-Lys) (interchain with K-? in acceptor proteins)" evidence="2">
    <location>
        <position position="101"/>
    </location>
</feature>
<protein>
    <recommendedName>
        <fullName evidence="2">Ubiquitin-related modifier 1 homolog</fullName>
    </recommendedName>
</protein>
<evidence type="ECO:0000250" key="1">
    <source>
        <dbReference type="UniProtKB" id="Q7KU86"/>
    </source>
</evidence>
<evidence type="ECO:0000255" key="2">
    <source>
        <dbReference type="HAMAP-Rule" id="MF_03048"/>
    </source>
</evidence>
<name>URM1_DROAN</name>
<gene>
    <name evidence="1" type="primary">Urm1</name>
    <name type="ORF">GF23776</name>
</gene>
<dbReference type="EMBL" id="CH902618">
    <property type="protein sequence ID" value="EDV40727.1"/>
    <property type="molecule type" value="Genomic_DNA"/>
</dbReference>
<dbReference type="SMR" id="B3M611"/>
<dbReference type="FunCoup" id="B3M611">
    <property type="interactions" value="1390"/>
</dbReference>
<dbReference type="STRING" id="7217.B3M611"/>
<dbReference type="EnsemblMetazoa" id="FBtr0128476">
    <property type="protein sequence ID" value="FBpp0126968"/>
    <property type="gene ID" value="FBgn0100770"/>
</dbReference>
<dbReference type="EnsemblMetazoa" id="XM_001957885.4">
    <property type="protein sequence ID" value="XP_001957921.1"/>
    <property type="gene ID" value="LOC6506415"/>
</dbReference>
<dbReference type="GeneID" id="6506415"/>
<dbReference type="KEGG" id="dan:6506415"/>
<dbReference type="CTD" id="81605"/>
<dbReference type="eggNOG" id="KOG4146">
    <property type="taxonomic scope" value="Eukaryota"/>
</dbReference>
<dbReference type="HOGENOM" id="CLU_148208_0_1_1"/>
<dbReference type="InParanoid" id="B3M611"/>
<dbReference type="OMA" id="DYELQPN"/>
<dbReference type="OrthoDB" id="10248987at2759"/>
<dbReference type="PhylomeDB" id="B3M611"/>
<dbReference type="UniPathway" id="UPA00988"/>
<dbReference type="Proteomes" id="UP000007801">
    <property type="component" value="Unassembled WGS sequence"/>
</dbReference>
<dbReference type="GO" id="GO:0005829">
    <property type="term" value="C:cytosol"/>
    <property type="evidence" value="ECO:0007669"/>
    <property type="project" value="UniProtKB-UniRule"/>
</dbReference>
<dbReference type="GO" id="GO:0046329">
    <property type="term" value="P:negative regulation of JNK cascade"/>
    <property type="evidence" value="ECO:0007669"/>
    <property type="project" value="EnsemblMetazoa"/>
</dbReference>
<dbReference type="GO" id="GO:0032447">
    <property type="term" value="P:protein urmylation"/>
    <property type="evidence" value="ECO:0007669"/>
    <property type="project" value="UniProtKB-UniRule"/>
</dbReference>
<dbReference type="GO" id="GO:0034227">
    <property type="term" value="P:tRNA thio-modification"/>
    <property type="evidence" value="ECO:0007669"/>
    <property type="project" value="UniProtKB-UniRule"/>
</dbReference>
<dbReference type="GO" id="GO:0002098">
    <property type="term" value="P:tRNA wobble uridine modification"/>
    <property type="evidence" value="ECO:0007669"/>
    <property type="project" value="UniProtKB-UniRule"/>
</dbReference>
<dbReference type="CDD" id="cd01764">
    <property type="entry name" value="Ubl_Urm1"/>
    <property type="match status" value="1"/>
</dbReference>
<dbReference type="FunFam" id="3.10.20.30:FF:000021">
    <property type="entry name" value="Ubiquitin-related modifier 1"/>
    <property type="match status" value="1"/>
</dbReference>
<dbReference type="Gene3D" id="3.10.20.30">
    <property type="match status" value="1"/>
</dbReference>
<dbReference type="HAMAP" id="MF_03048">
    <property type="entry name" value="Urm1"/>
    <property type="match status" value="1"/>
</dbReference>
<dbReference type="InterPro" id="IPR012675">
    <property type="entry name" value="Beta-grasp_dom_sf"/>
</dbReference>
<dbReference type="InterPro" id="IPR016155">
    <property type="entry name" value="Mopterin_synth/thiamin_S_b"/>
</dbReference>
<dbReference type="InterPro" id="IPR015221">
    <property type="entry name" value="Urm1"/>
</dbReference>
<dbReference type="PANTHER" id="PTHR14986">
    <property type="entry name" value="RURM1 PROTEIN"/>
    <property type="match status" value="1"/>
</dbReference>
<dbReference type="Pfam" id="PF09138">
    <property type="entry name" value="Urm1"/>
    <property type="match status" value="1"/>
</dbReference>
<dbReference type="PIRSF" id="PIRSF037379">
    <property type="entry name" value="Ubiquitin-related_modifier_1"/>
    <property type="match status" value="1"/>
</dbReference>
<dbReference type="SUPFAM" id="SSF54285">
    <property type="entry name" value="MoaD/ThiS"/>
    <property type="match status" value="1"/>
</dbReference>
<reference key="1">
    <citation type="journal article" date="2007" name="Nature">
        <title>Evolution of genes and genomes on the Drosophila phylogeny.</title>
        <authorList>
            <consortium name="Drosophila 12 genomes consortium"/>
        </authorList>
    </citation>
    <scope>NUCLEOTIDE SEQUENCE [LARGE SCALE GENOMIC DNA]</scope>
    <source>
        <strain>Tucson 14024-0371.13</strain>
    </source>
</reference>
<sequence>MGTAELKIILEFSAGAELLFGNIKRRQLALDGTKKWNIANLLKWMHANILTERPELFLQGDTVRPGILVLINDTDWELLGELDYELQPNDNVLFISTLHGG</sequence>
<accession>B3M611</accession>
<comment type="function">
    <text evidence="2">Acts as a sulfur carrier required for 2-thiolation of mcm(5)S(2)U at tRNA wobble positions of cytosolic tRNA(Lys), tRNA(Glu) and tRNA(Gln). Serves as sulfur donor in tRNA 2-thiolation reaction by being thiocarboxylated (-COSH) at its C-terminus by MOCS3. The sulfur is then transferred to tRNA to form 2-thiolation of mcm(5)S(2)U. Also acts as a ubiquitin-like protein (UBL) that is covalently conjugated via an isopeptide bond to lysine residues of target proteins such as Prx2/Jafrac1, Ciao1, Eip71CD and GILT1. The thiocarboxylated form serves as substrate for conjugation and oxidative stress specifically induces the formation of UBL-protein conjugates.</text>
</comment>
<comment type="pathway">
    <text evidence="2">tRNA modification; 5-methoxycarbonylmethyl-2-thiouridine-tRNA biosynthesis.</text>
</comment>
<comment type="subunit">
    <text evidence="1">Interacts with cer.</text>
</comment>
<comment type="subcellular location">
    <subcellularLocation>
        <location evidence="2">Cytoplasm</location>
    </subcellularLocation>
</comment>
<comment type="PTM">
    <text evidence="2">C-terminal thiocarboxylation occurs in 2 steps, it is first acyl-adenylated (-COAMP) via the hesA/moeB/thiF part of the MOCS3 homolog, then thiocarboxylated (-COSH) via the rhodanese domain of the MOCS3 homolog.</text>
</comment>
<comment type="similarity">
    <text evidence="2">Belongs to the URM1 family.</text>
</comment>
<proteinExistence type="inferred from homology"/>